<keyword id="KW-0067">ATP-binding</keyword>
<keyword id="KW-0547">Nucleotide-binding</keyword>
<reference key="1">
    <citation type="journal article" date="1998" name="Virology">
        <title>Genes and regulatory sites of the 'host-takeover module' in the terminal redundancy of Bacillus subtilis bacteriophage SPO1.</title>
        <authorList>
            <person name="Stewart C.R."/>
            <person name="Gaslightwala I."/>
            <person name="Hinata K."/>
            <person name="Krolikowski K.A."/>
            <person name="Needleman D.S."/>
            <person name="Peng A.S.-Y."/>
            <person name="Peterman M.A."/>
            <person name="Tobias A."/>
            <person name="Wei P."/>
        </authorList>
    </citation>
    <scope>NUCLEOTIDE SEQUENCE [GENOMIC DNA]</scope>
</reference>
<gene>
    <name type="primary">40</name>
</gene>
<protein>
    <recommendedName>
        <fullName>Gene 40 protein</fullName>
    </recommendedName>
</protein>
<sequence length="350" mass="40255">MHIYTYWGLKYVPSNSTMVAKEGDLILLGNEVHKVVKVLHRFRNITDLQITNWKGTETRYNLHVTEYKVLVPYDTHKEENEAMSDSLITHNGKDYVLCKIPARVGDLIRTEDKRVWEVLQKSKDGLVLYNEEKGEQRSAVYSEIGPYHVLVPRDTDTHTPTREELAAVIMNKAFTRTETQDSQEDTGTHKGLGLTGTDLYHSLRDLDAKVQSGYYTATENEEDVKSEIEATKKHMKAVKESGKTVNDYRKEENTKRCKLKALTNKFNRLFLKSVIDTDSLQVGKAYLIGGRDMKNVHGLYTGTTFDQQHANFLIVETDRMHRTLTVSAEQLFAEERHIVDIEKRVEQTED</sequence>
<organism>
    <name type="scientific">Bacillus phage SP01</name>
    <name type="common">Bacteriophage SP01</name>
    <dbReference type="NCBI Taxonomy" id="2884427"/>
    <lineage>
        <taxon>Viruses</taxon>
        <taxon>Duplodnaviria</taxon>
        <taxon>Heunggongvirae</taxon>
        <taxon>Uroviricota</taxon>
        <taxon>Caudoviricetes</taxon>
        <taxon>Herelleviridae</taxon>
        <taxon>Spounavirinae</taxon>
        <taxon>Okubovirus</taxon>
        <taxon>Okubovirus SPO1</taxon>
    </lineage>
</organism>
<accession>O48396</accession>
<feature type="chain" id="PRO_0000106146" description="Gene 40 protein">
    <location>
        <begin position="1"/>
        <end position="350"/>
    </location>
</feature>
<feature type="binding site" evidence="1">
    <location>
        <begin position="237"/>
        <end position="244"/>
    </location>
    <ligand>
        <name>ATP</name>
        <dbReference type="ChEBI" id="CHEBI:30616"/>
    </ligand>
</feature>
<evidence type="ECO:0000255" key="1"/>
<name>GP40_BPSP1</name>
<proteinExistence type="predicted"/>
<organismHost>
    <name type="scientific">Bacillus subtilis</name>
    <dbReference type="NCBI Taxonomy" id="1423"/>
</organismHost>
<dbReference type="EMBL" id="AF031901">
    <property type="protein sequence ID" value="AAC29009.1"/>
    <property type="molecule type" value="Genomic_DNA"/>
</dbReference>
<dbReference type="RefSeq" id="YP_002300284.1">
    <property type="nucleotide sequence ID" value="NC_011421.1"/>
</dbReference>
<dbReference type="GeneID" id="7008997"/>
<dbReference type="KEGG" id="vg:7008997"/>
<dbReference type="GO" id="GO:0005524">
    <property type="term" value="F:ATP binding"/>
    <property type="evidence" value="ECO:0007669"/>
    <property type="project" value="UniProtKB-KW"/>
</dbReference>